<evidence type="ECO:0000255" key="1">
    <source>
        <dbReference type="HAMAP-Rule" id="MF_00531"/>
    </source>
</evidence>
<evidence type="ECO:0000305" key="2"/>
<name>RS19_FRATW</name>
<dbReference type="EMBL" id="CP000608">
    <property type="protein sequence ID" value="ABO47429.1"/>
    <property type="molecule type" value="Genomic_DNA"/>
</dbReference>
<dbReference type="RefSeq" id="WP_003027195.1">
    <property type="nucleotide sequence ID" value="NC_009257.1"/>
</dbReference>
<dbReference type="SMR" id="A4IZT0"/>
<dbReference type="GeneID" id="75264257"/>
<dbReference type="KEGG" id="ftw:FTW_1753"/>
<dbReference type="HOGENOM" id="CLU_144911_0_1_6"/>
<dbReference type="GO" id="GO:0005737">
    <property type="term" value="C:cytoplasm"/>
    <property type="evidence" value="ECO:0007669"/>
    <property type="project" value="UniProtKB-ARBA"/>
</dbReference>
<dbReference type="GO" id="GO:0015935">
    <property type="term" value="C:small ribosomal subunit"/>
    <property type="evidence" value="ECO:0007669"/>
    <property type="project" value="InterPro"/>
</dbReference>
<dbReference type="GO" id="GO:0019843">
    <property type="term" value="F:rRNA binding"/>
    <property type="evidence" value="ECO:0007669"/>
    <property type="project" value="UniProtKB-UniRule"/>
</dbReference>
<dbReference type="GO" id="GO:0003735">
    <property type="term" value="F:structural constituent of ribosome"/>
    <property type="evidence" value="ECO:0007669"/>
    <property type="project" value="InterPro"/>
</dbReference>
<dbReference type="GO" id="GO:0000028">
    <property type="term" value="P:ribosomal small subunit assembly"/>
    <property type="evidence" value="ECO:0007669"/>
    <property type="project" value="TreeGrafter"/>
</dbReference>
<dbReference type="GO" id="GO:0006412">
    <property type="term" value="P:translation"/>
    <property type="evidence" value="ECO:0007669"/>
    <property type="project" value="UniProtKB-UniRule"/>
</dbReference>
<dbReference type="FunFam" id="3.30.860.10:FF:000001">
    <property type="entry name" value="30S ribosomal protein S19"/>
    <property type="match status" value="1"/>
</dbReference>
<dbReference type="Gene3D" id="3.30.860.10">
    <property type="entry name" value="30s Ribosomal Protein S19, Chain A"/>
    <property type="match status" value="1"/>
</dbReference>
<dbReference type="HAMAP" id="MF_00531">
    <property type="entry name" value="Ribosomal_uS19"/>
    <property type="match status" value="1"/>
</dbReference>
<dbReference type="InterPro" id="IPR002222">
    <property type="entry name" value="Ribosomal_uS19"/>
</dbReference>
<dbReference type="InterPro" id="IPR005732">
    <property type="entry name" value="Ribosomal_uS19_bac-type"/>
</dbReference>
<dbReference type="InterPro" id="IPR020934">
    <property type="entry name" value="Ribosomal_uS19_CS"/>
</dbReference>
<dbReference type="InterPro" id="IPR023575">
    <property type="entry name" value="Ribosomal_uS19_SF"/>
</dbReference>
<dbReference type="NCBIfam" id="TIGR01050">
    <property type="entry name" value="rpsS_bact"/>
    <property type="match status" value="1"/>
</dbReference>
<dbReference type="PANTHER" id="PTHR11880">
    <property type="entry name" value="RIBOSOMAL PROTEIN S19P FAMILY MEMBER"/>
    <property type="match status" value="1"/>
</dbReference>
<dbReference type="PANTHER" id="PTHR11880:SF8">
    <property type="entry name" value="SMALL RIBOSOMAL SUBUNIT PROTEIN US19M"/>
    <property type="match status" value="1"/>
</dbReference>
<dbReference type="Pfam" id="PF00203">
    <property type="entry name" value="Ribosomal_S19"/>
    <property type="match status" value="1"/>
</dbReference>
<dbReference type="PIRSF" id="PIRSF002144">
    <property type="entry name" value="Ribosomal_S19"/>
    <property type="match status" value="1"/>
</dbReference>
<dbReference type="PRINTS" id="PR00975">
    <property type="entry name" value="RIBOSOMALS19"/>
</dbReference>
<dbReference type="SUPFAM" id="SSF54570">
    <property type="entry name" value="Ribosomal protein S19"/>
    <property type="match status" value="1"/>
</dbReference>
<dbReference type="PROSITE" id="PS00323">
    <property type="entry name" value="RIBOSOMAL_S19"/>
    <property type="match status" value="1"/>
</dbReference>
<protein>
    <recommendedName>
        <fullName evidence="1">Small ribosomal subunit protein uS19</fullName>
    </recommendedName>
    <alternativeName>
        <fullName evidence="2">30S ribosomal protein S19</fullName>
    </alternativeName>
</protein>
<keyword id="KW-0687">Ribonucleoprotein</keyword>
<keyword id="KW-0689">Ribosomal protein</keyword>
<keyword id="KW-0694">RNA-binding</keyword>
<keyword id="KW-0699">rRNA-binding</keyword>
<organism>
    <name type="scientific">Francisella tularensis subsp. tularensis (strain WY96-3418)</name>
    <dbReference type="NCBI Taxonomy" id="418136"/>
    <lineage>
        <taxon>Bacteria</taxon>
        <taxon>Pseudomonadati</taxon>
        <taxon>Pseudomonadota</taxon>
        <taxon>Gammaproteobacteria</taxon>
        <taxon>Thiotrichales</taxon>
        <taxon>Francisellaceae</taxon>
        <taxon>Francisella</taxon>
    </lineage>
</organism>
<comment type="function">
    <text evidence="1">Protein S19 forms a complex with S13 that binds strongly to the 16S ribosomal RNA.</text>
</comment>
<comment type="similarity">
    <text evidence="1">Belongs to the universal ribosomal protein uS19 family.</text>
</comment>
<feature type="chain" id="PRO_1000051052" description="Small ribosomal subunit protein uS19">
    <location>
        <begin position="1"/>
        <end position="92"/>
    </location>
</feature>
<gene>
    <name evidence="1" type="primary">rpsS</name>
    <name type="ordered locus">FTW_1753</name>
</gene>
<sequence>MPRSLKKGPFVDHHLLKKVFEAQESNSKKPIKTWSRRSMIVPDMIGLTIAVHNGQQHVPVLMTEEMVGHKLGEFVVTRNYRGHAADKKAKKK</sequence>
<proteinExistence type="inferred from homology"/>
<accession>A4IZT0</accession>
<reference key="1">
    <citation type="journal article" date="2007" name="PLoS ONE">
        <title>Complete genomic characterization of a pathogenic A.II strain of Francisella tularensis subspecies tularensis.</title>
        <authorList>
            <person name="Beckstrom-Sternberg S.M."/>
            <person name="Auerbach R.K."/>
            <person name="Godbole S."/>
            <person name="Pearson J.V."/>
            <person name="Beckstrom-Sternberg J.S."/>
            <person name="Deng Z."/>
            <person name="Munk C."/>
            <person name="Kubota K."/>
            <person name="Zhou Y."/>
            <person name="Bruce D."/>
            <person name="Noronha J."/>
            <person name="Scheuermann R.H."/>
            <person name="Wang A."/>
            <person name="Wei X."/>
            <person name="Wang J."/>
            <person name="Hao J."/>
            <person name="Wagner D.M."/>
            <person name="Brettin T.S."/>
            <person name="Brown N."/>
            <person name="Gilna P."/>
            <person name="Keim P.S."/>
        </authorList>
    </citation>
    <scope>NUCLEOTIDE SEQUENCE [LARGE SCALE GENOMIC DNA]</scope>
    <source>
        <strain>WY96-3418</strain>
    </source>
</reference>